<reference key="1">
    <citation type="submission" date="1997-04" db="EMBL/GenBank/DDBJ databases">
        <authorList>
            <person name="Pearlman R.E."/>
        </authorList>
    </citation>
    <scope>NUCLEOTIDE SEQUENCE [GENOMIC DNA]</scope>
</reference>
<evidence type="ECO:0000250" key="1"/>
<evidence type="ECO:0000250" key="2">
    <source>
        <dbReference type="UniProtKB" id="P00558"/>
    </source>
</evidence>
<evidence type="ECO:0000250" key="3">
    <source>
        <dbReference type="UniProtKB" id="Q7SIB7"/>
    </source>
</evidence>
<evidence type="ECO:0000305" key="4"/>
<organism>
    <name type="scientific">Condylostoma magnum</name>
    <dbReference type="NCBI Taxonomy" id="40633"/>
    <lineage>
        <taxon>Eukaryota</taxon>
        <taxon>Sar</taxon>
        <taxon>Alveolata</taxon>
        <taxon>Ciliophora</taxon>
        <taxon>Postciliodesmatophora</taxon>
        <taxon>Heterotrichea</taxon>
        <taxon>Heterotrichida</taxon>
        <taxon>Condylostomatidae</taxon>
        <taxon>Condylostoma</taxon>
    </lineage>
</organism>
<accession>O00940</accession>
<proteinExistence type="inferred from homology"/>
<feature type="chain" id="PRO_0000145847" description="Phosphoglycerate kinase">
    <location>
        <begin position="1" status="less than"/>
        <end position="378" status="greater than"/>
    </location>
</feature>
<feature type="binding site" evidence="2">
    <location>
        <position position="1"/>
    </location>
    <ligand>
        <name>(2R)-3-phosphoglycerate</name>
        <dbReference type="ChEBI" id="CHEBI:58272"/>
    </ligand>
</feature>
<feature type="binding site" evidence="3">
    <location>
        <position position="2"/>
    </location>
    <ligand>
        <name>(2R)-3-phosphoglycerate</name>
        <dbReference type="ChEBI" id="CHEBI:58272"/>
    </ligand>
</feature>
<feature type="binding site" evidence="2">
    <location>
        <position position="3"/>
    </location>
    <ligand>
        <name>(2R)-3-phosphoglycerate</name>
        <dbReference type="ChEBI" id="CHEBI:58272"/>
    </ligand>
</feature>
<feature type="binding site" evidence="3">
    <location>
        <position position="4"/>
    </location>
    <ligand>
        <name>(2R)-3-phosphoglycerate</name>
        <dbReference type="ChEBI" id="CHEBI:58272"/>
    </ligand>
</feature>
<feature type="binding site" evidence="2">
    <location>
        <position position="16"/>
    </location>
    <ligand>
        <name>(2R)-3-phosphoglycerate</name>
        <dbReference type="ChEBI" id="CHEBI:58272"/>
    </ligand>
</feature>
<feature type="binding site" evidence="3">
    <location>
        <position position="17"/>
    </location>
    <ligand>
        <name>(2R)-3-phosphoglycerate</name>
        <dbReference type="ChEBI" id="CHEBI:58272"/>
    </ligand>
</feature>
<feature type="binding site" evidence="2">
    <location>
        <position position="40"/>
    </location>
    <ligand>
        <name>(2R)-3-phosphoglycerate</name>
        <dbReference type="ChEBI" id="CHEBI:58272"/>
    </ligand>
</feature>
<feature type="binding site" evidence="3">
    <location>
        <position position="41"/>
    </location>
    <ligand>
        <name>(2R)-3-phosphoglycerate</name>
        <dbReference type="ChEBI" id="CHEBI:58272"/>
    </ligand>
</feature>
<feature type="binding site" evidence="2">
    <location>
        <position position="43"/>
    </location>
    <ligand>
        <name>(2R)-3-phosphoglycerate</name>
        <dbReference type="ChEBI" id="CHEBI:58272"/>
    </ligand>
</feature>
<feature type="binding site" evidence="3">
    <location>
        <position position="44"/>
    </location>
    <ligand>
        <name>(2R)-3-phosphoglycerate</name>
        <dbReference type="ChEBI" id="CHEBI:58272"/>
    </ligand>
</feature>
<feature type="binding site" evidence="2">
    <location>
        <position position="99"/>
    </location>
    <ligand>
        <name>(2R)-3-phosphoglycerate</name>
        <dbReference type="ChEBI" id="CHEBI:58272"/>
    </ligand>
</feature>
<feature type="binding site" evidence="3">
    <location>
        <position position="100"/>
    </location>
    <ligand>
        <name>(2R)-3-phosphoglycerate</name>
        <dbReference type="ChEBI" id="CHEBI:58272"/>
    </ligand>
</feature>
<feature type="binding site" evidence="2">
    <location>
        <position position="147"/>
    </location>
    <ligand>
        <name>(2R)-3-phosphoglycerate</name>
        <dbReference type="ChEBI" id="CHEBI:58272"/>
    </ligand>
</feature>
<feature type="binding site" evidence="3">
    <location>
        <position position="148"/>
    </location>
    <ligand>
        <name>(2R)-3-phosphoglycerate</name>
        <dbReference type="ChEBI" id="CHEBI:58272"/>
    </ligand>
</feature>
<feature type="binding site" evidence="2">
    <location>
        <position position="191"/>
    </location>
    <ligand>
        <name>ADP</name>
        <dbReference type="ChEBI" id="CHEBI:456216"/>
    </ligand>
</feature>
<feature type="binding site" evidence="2">
    <location>
        <position position="191"/>
    </location>
    <ligand>
        <name>CDP</name>
        <dbReference type="ChEBI" id="CHEBI:58069"/>
    </ligand>
</feature>
<feature type="binding site" evidence="3">
    <location>
        <position position="192"/>
    </location>
    <ligand>
        <name>AMP</name>
        <dbReference type="ChEBI" id="CHEBI:456215"/>
    </ligand>
</feature>
<feature type="binding site" evidence="3">
    <location>
        <position position="192"/>
    </location>
    <ligand>
        <name>ATP</name>
        <dbReference type="ChEBI" id="CHEBI:30616"/>
    </ligand>
</feature>
<feature type="binding site" evidence="2">
    <location>
        <position position="192"/>
    </location>
    <ligand>
        <name>Mg(2+)</name>
        <dbReference type="ChEBI" id="CHEBI:18420"/>
    </ligand>
</feature>
<feature type="binding site" evidence="3">
    <location>
        <position position="193"/>
    </location>
    <ligand>
        <name>AMP</name>
        <dbReference type="ChEBI" id="CHEBI:456215"/>
    </ligand>
</feature>
<feature type="binding site" evidence="2">
    <location>
        <position position="196"/>
    </location>
    <ligand>
        <name>CDP</name>
        <dbReference type="ChEBI" id="CHEBI:58069"/>
    </ligand>
</feature>
<feature type="binding site" evidence="2">
    <location>
        <position position="196"/>
    </location>
    <ligand>
        <name>Mg(2+)</name>
        <dbReference type="ChEBI" id="CHEBI:18420"/>
    </ligand>
</feature>
<feature type="binding site" evidence="3">
    <location>
        <position position="197"/>
    </location>
    <ligand>
        <name>AMP</name>
        <dbReference type="ChEBI" id="CHEBI:456215"/>
    </ligand>
</feature>
<feature type="binding site" evidence="3">
    <location>
        <position position="197"/>
    </location>
    <ligand>
        <name>ATP</name>
        <dbReference type="ChEBI" id="CHEBI:30616"/>
    </ligand>
</feature>
<feature type="binding site" evidence="2">
    <location>
        <position position="215"/>
    </location>
    <ligand>
        <name>ADP</name>
        <dbReference type="ChEBI" id="CHEBI:456216"/>
    </ligand>
</feature>
<feature type="binding site" evidence="2">
    <location>
        <position position="215"/>
    </location>
    <ligand>
        <name>CDP</name>
        <dbReference type="ChEBI" id="CHEBI:58069"/>
    </ligand>
</feature>
<feature type="binding site" evidence="3">
    <location>
        <position position="216"/>
    </location>
    <ligand>
        <name>AMP</name>
        <dbReference type="ChEBI" id="CHEBI:456215"/>
    </ligand>
</feature>
<feature type="binding site" evidence="3">
    <location>
        <position position="216"/>
    </location>
    <ligand>
        <name>ATP</name>
        <dbReference type="ChEBI" id="CHEBI:30616"/>
    </ligand>
</feature>
<feature type="binding site" evidence="3">
    <location>
        <position position="288"/>
    </location>
    <ligand>
        <name>AMP</name>
        <dbReference type="ChEBI" id="CHEBI:456215"/>
    </ligand>
</feature>
<feature type="binding site" evidence="3">
    <location>
        <position position="288"/>
    </location>
    <ligand>
        <name>ATP</name>
        <dbReference type="ChEBI" id="CHEBI:30616"/>
    </ligand>
</feature>
<feature type="binding site" evidence="2">
    <location>
        <position position="313"/>
    </location>
    <ligand>
        <name>CDP</name>
        <dbReference type="ChEBI" id="CHEBI:58069"/>
    </ligand>
</feature>
<feature type="binding site" evidence="2">
    <location>
        <position position="318"/>
    </location>
    <ligand>
        <name>ADP</name>
        <dbReference type="ChEBI" id="CHEBI:456216"/>
    </ligand>
</feature>
<feature type="binding site" evidence="2">
    <location>
        <position position="318"/>
    </location>
    <ligand>
        <name>CDP</name>
        <dbReference type="ChEBI" id="CHEBI:58069"/>
    </ligand>
</feature>
<feature type="binding site" evidence="3">
    <location>
        <position position="319"/>
    </location>
    <ligand>
        <name>AMP</name>
        <dbReference type="ChEBI" id="CHEBI:456215"/>
    </ligand>
</feature>
<feature type="binding site" evidence="3">
    <location>
        <position position="319"/>
    </location>
    <ligand>
        <name>ATP</name>
        <dbReference type="ChEBI" id="CHEBI:30616"/>
    </ligand>
</feature>
<feature type="binding site" evidence="3">
    <location>
        <position position="351"/>
    </location>
    <ligand>
        <name>ATP</name>
        <dbReference type="ChEBI" id="CHEBI:30616"/>
    </ligand>
</feature>
<feature type="binding site" evidence="3">
    <location>
        <position position="351"/>
    </location>
    <ligand>
        <name>Mg(2+)</name>
        <dbReference type="ChEBI" id="CHEBI:18420"/>
    </ligand>
</feature>
<feature type="binding site" evidence="3">
    <location>
        <position position="352"/>
    </location>
    <ligand>
        <name>ATP</name>
        <dbReference type="ChEBI" id="CHEBI:30616"/>
    </ligand>
</feature>
<feature type="non-terminal residue">
    <location>
        <position position="1"/>
    </location>
</feature>
<feature type="non-terminal residue">
    <location>
        <position position="378"/>
    </location>
</feature>
<sequence length="378" mass="40900">VDFNVPIKDGRITDSNRIQATLPSIQAVLDNGAKSLVLMSHLGRPDGRRDEKSSLRPVAEQLQTLLGRPVTFLEDCVGPEIESACADPAPGSVFLLENLRFHPEEEGAGVDESGNKFKPSQEQVQTFRDSLTRLGDVYINDAFGTAHRAHSSMAGINLPQRAAGYLMGKELEYFSRALENPNRPLLVIMGGAKVSDKIQLINNLLDNCNEMIIAGGMAFTFKKVLDNLEIGNSLFDEAGAKIVQGIIDKAAERHVQIHLPTDFVCGDKFETGCNVQTYSGNIPEGFMGLDIGPELQEAMAQAIQRAETIVWNGPPGVFEIPEFRAGSERFFREIVAATRDRRVVSIVGGGDTAAFAKTMGDESDVISHISTGGGASDP</sequence>
<dbReference type="EC" id="2.7.2.3" evidence="2"/>
<dbReference type="EMBL" id="U97356">
    <property type="protein sequence ID" value="AAB58163.1"/>
    <property type="molecule type" value="Genomic_DNA"/>
</dbReference>
<dbReference type="SMR" id="O00940"/>
<dbReference type="UniPathway" id="UPA00109">
    <property type="reaction ID" value="UER00185"/>
</dbReference>
<dbReference type="GO" id="GO:0005829">
    <property type="term" value="C:cytosol"/>
    <property type="evidence" value="ECO:0007669"/>
    <property type="project" value="TreeGrafter"/>
</dbReference>
<dbReference type="GO" id="GO:0043531">
    <property type="term" value="F:ADP binding"/>
    <property type="evidence" value="ECO:0007669"/>
    <property type="project" value="TreeGrafter"/>
</dbReference>
<dbReference type="GO" id="GO:0005524">
    <property type="term" value="F:ATP binding"/>
    <property type="evidence" value="ECO:0007669"/>
    <property type="project" value="UniProtKB-KW"/>
</dbReference>
<dbReference type="GO" id="GO:0046872">
    <property type="term" value="F:metal ion binding"/>
    <property type="evidence" value="ECO:0007669"/>
    <property type="project" value="UniProtKB-KW"/>
</dbReference>
<dbReference type="GO" id="GO:0004618">
    <property type="term" value="F:phosphoglycerate kinase activity"/>
    <property type="evidence" value="ECO:0007669"/>
    <property type="project" value="UniProtKB-EC"/>
</dbReference>
<dbReference type="GO" id="GO:0006094">
    <property type="term" value="P:gluconeogenesis"/>
    <property type="evidence" value="ECO:0007669"/>
    <property type="project" value="TreeGrafter"/>
</dbReference>
<dbReference type="GO" id="GO:0006096">
    <property type="term" value="P:glycolytic process"/>
    <property type="evidence" value="ECO:0007669"/>
    <property type="project" value="UniProtKB-UniPathway"/>
</dbReference>
<dbReference type="CDD" id="cd00318">
    <property type="entry name" value="Phosphoglycerate_kinase"/>
    <property type="match status" value="1"/>
</dbReference>
<dbReference type="FunFam" id="3.40.50.1260:FF:000003">
    <property type="entry name" value="Phosphoglycerate kinase"/>
    <property type="match status" value="1"/>
</dbReference>
<dbReference type="FunFam" id="3.40.50.1260:FF:000019">
    <property type="entry name" value="Phosphoglycerate kinase 1"/>
    <property type="match status" value="1"/>
</dbReference>
<dbReference type="Gene3D" id="3.40.50.1260">
    <property type="entry name" value="Phosphoglycerate kinase, N-terminal domain"/>
    <property type="match status" value="3"/>
</dbReference>
<dbReference type="InterPro" id="IPR001576">
    <property type="entry name" value="Phosphoglycerate_kinase"/>
</dbReference>
<dbReference type="InterPro" id="IPR015824">
    <property type="entry name" value="Phosphoglycerate_kinase_N"/>
</dbReference>
<dbReference type="InterPro" id="IPR036043">
    <property type="entry name" value="Phosphoglycerate_kinase_sf"/>
</dbReference>
<dbReference type="PANTHER" id="PTHR11406">
    <property type="entry name" value="PHOSPHOGLYCERATE KINASE"/>
    <property type="match status" value="1"/>
</dbReference>
<dbReference type="PANTHER" id="PTHR11406:SF0">
    <property type="entry name" value="PHOSPHOGLYCERATE KINASE"/>
    <property type="match status" value="1"/>
</dbReference>
<dbReference type="Pfam" id="PF00162">
    <property type="entry name" value="PGK"/>
    <property type="match status" value="1"/>
</dbReference>
<dbReference type="PIRSF" id="PIRSF000724">
    <property type="entry name" value="Pgk"/>
    <property type="match status" value="1"/>
</dbReference>
<dbReference type="PRINTS" id="PR00477">
    <property type="entry name" value="PHGLYCKINASE"/>
</dbReference>
<dbReference type="SUPFAM" id="SSF53748">
    <property type="entry name" value="Phosphoglycerate kinase"/>
    <property type="match status" value="1"/>
</dbReference>
<keyword id="KW-0067">ATP-binding</keyword>
<keyword id="KW-0324">Glycolysis</keyword>
<keyword id="KW-0418">Kinase</keyword>
<keyword id="KW-0460">Magnesium</keyword>
<keyword id="KW-0479">Metal-binding</keyword>
<keyword id="KW-0547">Nucleotide-binding</keyword>
<keyword id="KW-0808">Transferase</keyword>
<gene>
    <name type="primary">PGK</name>
</gene>
<comment type="catalytic activity">
    <reaction evidence="2">
        <text>(2R)-3-phosphoglycerate + ATP = (2R)-3-phospho-glyceroyl phosphate + ADP</text>
        <dbReference type="Rhea" id="RHEA:14801"/>
        <dbReference type="ChEBI" id="CHEBI:30616"/>
        <dbReference type="ChEBI" id="CHEBI:57604"/>
        <dbReference type="ChEBI" id="CHEBI:58272"/>
        <dbReference type="ChEBI" id="CHEBI:456216"/>
        <dbReference type="EC" id="2.7.2.3"/>
    </reaction>
</comment>
<comment type="cofactor">
    <cofactor evidence="2">
        <name>Mg(2+)</name>
        <dbReference type="ChEBI" id="CHEBI:18420"/>
    </cofactor>
</comment>
<comment type="pathway">
    <text>Carbohydrate degradation; glycolysis; pyruvate from D-glyceraldehyde 3-phosphate: step 2/5.</text>
</comment>
<comment type="subunit">
    <text evidence="1">Monomer.</text>
</comment>
<comment type="similarity">
    <text evidence="4">Belongs to the phosphoglycerate kinase family.</text>
</comment>
<name>PGK_CONMG</name>
<protein>
    <recommendedName>
        <fullName>Phosphoglycerate kinase</fullName>
        <ecNumber evidence="2">2.7.2.3</ecNumber>
    </recommendedName>
</protein>